<reference key="1">
    <citation type="journal article" date="2005" name="Nucleic Acids Res.">
        <title>The genome sequence of Xanthomonas oryzae pathovar oryzae KACC10331, the bacterial blight pathogen of rice.</title>
        <authorList>
            <person name="Lee B.-M."/>
            <person name="Park Y.-J."/>
            <person name="Park D.-S."/>
            <person name="Kang H.-W."/>
            <person name="Kim J.-G."/>
            <person name="Song E.-S."/>
            <person name="Park I.-C."/>
            <person name="Yoon U.-H."/>
            <person name="Hahn J.-H."/>
            <person name="Koo B.-S."/>
            <person name="Lee G.-B."/>
            <person name="Kim H."/>
            <person name="Park H.-S."/>
            <person name="Yoon K.-O."/>
            <person name="Kim J.-H."/>
            <person name="Jung C.-H."/>
            <person name="Koh N.-H."/>
            <person name="Seo J.-S."/>
            <person name="Go S.-J."/>
        </authorList>
    </citation>
    <scope>NUCLEOTIDE SEQUENCE [LARGE SCALE GENOMIC DNA]</scope>
    <source>
        <strain>KACC10331 / KXO85</strain>
    </source>
</reference>
<dbReference type="EC" id="6.3.4.20" evidence="1"/>
<dbReference type="EMBL" id="AE013598">
    <property type="protein sequence ID" value="AAW74933.1"/>
    <property type="molecule type" value="Genomic_DNA"/>
</dbReference>
<dbReference type="SMR" id="Q5H288"/>
<dbReference type="STRING" id="291331.XOO1679"/>
<dbReference type="KEGG" id="xoo:XOO1679"/>
<dbReference type="HOGENOM" id="CLU_081854_1_1_6"/>
<dbReference type="UniPathway" id="UPA00391"/>
<dbReference type="Proteomes" id="UP000006735">
    <property type="component" value="Chromosome"/>
</dbReference>
<dbReference type="GO" id="GO:0005524">
    <property type="term" value="F:ATP binding"/>
    <property type="evidence" value="ECO:0007669"/>
    <property type="project" value="UniProtKB-UniRule"/>
</dbReference>
<dbReference type="GO" id="GO:0016879">
    <property type="term" value="F:ligase activity, forming carbon-nitrogen bonds"/>
    <property type="evidence" value="ECO:0007669"/>
    <property type="project" value="UniProtKB-UniRule"/>
</dbReference>
<dbReference type="GO" id="GO:0008270">
    <property type="term" value="F:zinc ion binding"/>
    <property type="evidence" value="ECO:0007669"/>
    <property type="project" value="UniProtKB-UniRule"/>
</dbReference>
<dbReference type="GO" id="GO:0008616">
    <property type="term" value="P:queuosine biosynthetic process"/>
    <property type="evidence" value="ECO:0007669"/>
    <property type="project" value="UniProtKB-UniRule"/>
</dbReference>
<dbReference type="CDD" id="cd01995">
    <property type="entry name" value="QueC-like"/>
    <property type="match status" value="1"/>
</dbReference>
<dbReference type="FunFam" id="3.40.50.620:FF:000131">
    <property type="entry name" value="7-cyano-7-deazaguanine synthase"/>
    <property type="match status" value="1"/>
</dbReference>
<dbReference type="Gene3D" id="3.40.50.620">
    <property type="entry name" value="HUPs"/>
    <property type="match status" value="1"/>
</dbReference>
<dbReference type="HAMAP" id="MF_01633">
    <property type="entry name" value="QueC"/>
    <property type="match status" value="1"/>
</dbReference>
<dbReference type="InterPro" id="IPR018317">
    <property type="entry name" value="QueC"/>
</dbReference>
<dbReference type="InterPro" id="IPR014729">
    <property type="entry name" value="Rossmann-like_a/b/a_fold"/>
</dbReference>
<dbReference type="NCBIfam" id="TIGR00364">
    <property type="entry name" value="7-cyano-7-deazaguanine synthase QueC"/>
    <property type="match status" value="1"/>
</dbReference>
<dbReference type="PANTHER" id="PTHR42914">
    <property type="entry name" value="7-CYANO-7-DEAZAGUANINE SYNTHASE"/>
    <property type="match status" value="1"/>
</dbReference>
<dbReference type="PANTHER" id="PTHR42914:SF1">
    <property type="entry name" value="7-CYANO-7-DEAZAGUANINE SYNTHASE"/>
    <property type="match status" value="1"/>
</dbReference>
<dbReference type="Pfam" id="PF06508">
    <property type="entry name" value="QueC"/>
    <property type="match status" value="1"/>
</dbReference>
<dbReference type="PIRSF" id="PIRSF006293">
    <property type="entry name" value="ExsB"/>
    <property type="match status" value="1"/>
</dbReference>
<dbReference type="SUPFAM" id="SSF52402">
    <property type="entry name" value="Adenine nucleotide alpha hydrolases-like"/>
    <property type="match status" value="1"/>
</dbReference>
<gene>
    <name evidence="1" type="primary">queC</name>
    <name type="ordered locus">XOO1679</name>
</gene>
<organism>
    <name type="scientific">Xanthomonas oryzae pv. oryzae (strain KACC10331 / KXO85)</name>
    <dbReference type="NCBI Taxonomy" id="291331"/>
    <lineage>
        <taxon>Bacteria</taxon>
        <taxon>Pseudomonadati</taxon>
        <taxon>Pseudomonadota</taxon>
        <taxon>Gammaproteobacteria</taxon>
        <taxon>Lysobacterales</taxon>
        <taxon>Lysobacteraceae</taxon>
        <taxon>Xanthomonas</taxon>
    </lineage>
</organism>
<accession>Q5H288</accession>
<evidence type="ECO:0000255" key="1">
    <source>
        <dbReference type="HAMAP-Rule" id="MF_01633"/>
    </source>
</evidence>
<name>QUEC_XANOR</name>
<protein>
    <recommendedName>
        <fullName evidence="1">7-cyano-7-deazaguanine synthase</fullName>
        <ecNumber evidence="1">6.3.4.20</ecNumber>
    </recommendedName>
    <alternativeName>
        <fullName evidence="1">7-cyano-7-carbaguanine synthase</fullName>
    </alternativeName>
    <alternativeName>
        <fullName evidence="1">PreQ(0) synthase</fullName>
    </alternativeName>
    <alternativeName>
        <fullName evidence="1">Queuosine biosynthesis protein QueC</fullName>
    </alternativeName>
</protein>
<keyword id="KW-0067">ATP-binding</keyword>
<keyword id="KW-0436">Ligase</keyword>
<keyword id="KW-0479">Metal-binding</keyword>
<keyword id="KW-0547">Nucleotide-binding</keyword>
<keyword id="KW-0671">Queuosine biosynthesis</keyword>
<keyword id="KW-1185">Reference proteome</keyword>
<keyword id="KW-0862">Zinc</keyword>
<proteinExistence type="inferred from homology"/>
<sequence length="224" mass="23263">MKKAVVLLSGGMDSAAVIALAQEQGFAVYALSVRYGQRHTSELDAAARVAAAQGVVAHKVVDVDLRSIGGSALTDDIDVPDAGGDGIPVTYVPARNTIMLSLALGWAEVVGANDLFCGVNAVDYSGYPDCRPEFVRAFEVLANLATKAGVEGAGLRVHAPLQFLSKADIVREGVRLGVDFGLTVSCYRADADGRACGHCDACRLRAAGFADAGVPDPTHYAILS</sequence>
<comment type="function">
    <text evidence="1">Catalyzes the ATP-dependent conversion of 7-carboxy-7-deazaguanine (CDG) to 7-cyano-7-deazaguanine (preQ(0)).</text>
</comment>
<comment type="catalytic activity">
    <reaction evidence="1">
        <text>7-carboxy-7-deazaguanine + NH4(+) + ATP = 7-cyano-7-deazaguanine + ADP + phosphate + H2O + H(+)</text>
        <dbReference type="Rhea" id="RHEA:27982"/>
        <dbReference type="ChEBI" id="CHEBI:15377"/>
        <dbReference type="ChEBI" id="CHEBI:15378"/>
        <dbReference type="ChEBI" id="CHEBI:28938"/>
        <dbReference type="ChEBI" id="CHEBI:30616"/>
        <dbReference type="ChEBI" id="CHEBI:43474"/>
        <dbReference type="ChEBI" id="CHEBI:45075"/>
        <dbReference type="ChEBI" id="CHEBI:61036"/>
        <dbReference type="ChEBI" id="CHEBI:456216"/>
        <dbReference type="EC" id="6.3.4.20"/>
    </reaction>
</comment>
<comment type="cofactor">
    <cofactor evidence="1">
        <name>Zn(2+)</name>
        <dbReference type="ChEBI" id="CHEBI:29105"/>
    </cofactor>
    <text evidence="1">Binds 1 zinc ion per subunit.</text>
</comment>
<comment type="pathway">
    <text evidence="1">Purine metabolism; 7-cyano-7-deazaguanine biosynthesis.</text>
</comment>
<comment type="similarity">
    <text evidence="1">Belongs to the QueC family.</text>
</comment>
<feature type="chain" id="PRO_0000246965" description="7-cyano-7-deazaguanine synthase">
    <location>
        <begin position="1"/>
        <end position="224"/>
    </location>
</feature>
<feature type="binding site" evidence="1">
    <location>
        <begin position="8"/>
        <end position="18"/>
    </location>
    <ligand>
        <name>ATP</name>
        <dbReference type="ChEBI" id="CHEBI:30616"/>
    </ligand>
</feature>
<feature type="binding site" evidence="1">
    <location>
        <position position="186"/>
    </location>
    <ligand>
        <name>Zn(2+)</name>
        <dbReference type="ChEBI" id="CHEBI:29105"/>
    </ligand>
</feature>
<feature type="binding site" evidence="1">
    <location>
        <position position="196"/>
    </location>
    <ligand>
        <name>Zn(2+)</name>
        <dbReference type="ChEBI" id="CHEBI:29105"/>
    </ligand>
</feature>
<feature type="binding site" evidence="1">
    <location>
        <position position="199"/>
    </location>
    <ligand>
        <name>Zn(2+)</name>
        <dbReference type="ChEBI" id="CHEBI:29105"/>
    </ligand>
</feature>
<feature type="binding site" evidence="1">
    <location>
        <position position="202"/>
    </location>
    <ligand>
        <name>Zn(2+)</name>
        <dbReference type="ChEBI" id="CHEBI:29105"/>
    </ligand>
</feature>